<evidence type="ECO:0000255" key="1">
    <source>
        <dbReference type="HAMAP-Rule" id="MF_01684"/>
    </source>
</evidence>
<feature type="chain" id="PRO_0000359362" description="5'-methylthioadenosine/S-adenosylhomocysteine nucleosidase">
    <location>
        <begin position="1"/>
        <end position="228"/>
    </location>
</feature>
<feature type="active site" description="Proton acceptor" evidence="1">
    <location>
        <position position="11"/>
    </location>
</feature>
<feature type="active site" description="Proton donor" evidence="1">
    <location>
        <position position="196"/>
    </location>
</feature>
<feature type="binding site" evidence="1">
    <location>
        <position position="77"/>
    </location>
    <ligand>
        <name>substrate</name>
    </ligand>
</feature>
<feature type="binding site" evidence="1">
    <location>
        <position position="151"/>
    </location>
    <ligand>
        <name>substrate</name>
    </ligand>
</feature>
<feature type="binding site" evidence="1">
    <location>
        <begin position="172"/>
        <end position="173"/>
    </location>
    <ligand>
        <name>substrate</name>
    </ligand>
</feature>
<proteinExistence type="inferred from homology"/>
<dbReference type="EC" id="3.2.2.9" evidence="1"/>
<dbReference type="EMBL" id="AJ938182">
    <property type="protein sequence ID" value="CAI81160.1"/>
    <property type="molecule type" value="Genomic_DNA"/>
</dbReference>
<dbReference type="RefSeq" id="WP_000579266.1">
    <property type="nucleotide sequence ID" value="NC_007622.1"/>
</dbReference>
<dbReference type="SMR" id="Q2YT29"/>
<dbReference type="KEGG" id="sab:SAB1471c"/>
<dbReference type="HOGENOM" id="CLU_031248_2_2_9"/>
<dbReference type="UniPathway" id="UPA00904">
    <property type="reaction ID" value="UER00871"/>
</dbReference>
<dbReference type="GO" id="GO:0005829">
    <property type="term" value="C:cytosol"/>
    <property type="evidence" value="ECO:0007669"/>
    <property type="project" value="TreeGrafter"/>
</dbReference>
<dbReference type="GO" id="GO:0008782">
    <property type="term" value="F:adenosylhomocysteine nucleosidase activity"/>
    <property type="evidence" value="ECO:0007669"/>
    <property type="project" value="UniProtKB-UniRule"/>
</dbReference>
<dbReference type="GO" id="GO:0008930">
    <property type="term" value="F:methylthioadenosine nucleosidase activity"/>
    <property type="evidence" value="ECO:0007669"/>
    <property type="project" value="UniProtKB-UniRule"/>
</dbReference>
<dbReference type="GO" id="GO:0019509">
    <property type="term" value="P:L-methionine salvage from methylthioadenosine"/>
    <property type="evidence" value="ECO:0007669"/>
    <property type="project" value="UniProtKB-UniRule"/>
</dbReference>
<dbReference type="GO" id="GO:0019284">
    <property type="term" value="P:L-methionine salvage from S-adenosylmethionine"/>
    <property type="evidence" value="ECO:0007669"/>
    <property type="project" value="TreeGrafter"/>
</dbReference>
<dbReference type="GO" id="GO:0009164">
    <property type="term" value="P:nucleoside catabolic process"/>
    <property type="evidence" value="ECO:0007669"/>
    <property type="project" value="InterPro"/>
</dbReference>
<dbReference type="CDD" id="cd09008">
    <property type="entry name" value="MTAN"/>
    <property type="match status" value="1"/>
</dbReference>
<dbReference type="FunFam" id="3.40.50.1580:FF:000001">
    <property type="entry name" value="MTA/SAH nucleosidase family protein"/>
    <property type="match status" value="1"/>
</dbReference>
<dbReference type="Gene3D" id="3.40.50.1580">
    <property type="entry name" value="Nucleoside phosphorylase domain"/>
    <property type="match status" value="1"/>
</dbReference>
<dbReference type="HAMAP" id="MF_01684">
    <property type="entry name" value="Salvage_MtnN"/>
    <property type="match status" value="1"/>
</dbReference>
<dbReference type="InterPro" id="IPR010049">
    <property type="entry name" value="MTA_SAH_Nsdase"/>
</dbReference>
<dbReference type="InterPro" id="IPR000845">
    <property type="entry name" value="Nucleoside_phosphorylase_d"/>
</dbReference>
<dbReference type="InterPro" id="IPR035994">
    <property type="entry name" value="Nucleoside_phosphorylase_sf"/>
</dbReference>
<dbReference type="NCBIfam" id="TIGR01704">
    <property type="entry name" value="MTA_SAH-Nsdase"/>
    <property type="match status" value="1"/>
</dbReference>
<dbReference type="NCBIfam" id="NF004079">
    <property type="entry name" value="PRK05584.1"/>
    <property type="match status" value="1"/>
</dbReference>
<dbReference type="PANTHER" id="PTHR46832">
    <property type="entry name" value="5'-METHYLTHIOADENOSINE/S-ADENOSYLHOMOCYSTEINE NUCLEOSIDASE"/>
    <property type="match status" value="1"/>
</dbReference>
<dbReference type="PANTHER" id="PTHR46832:SF1">
    <property type="entry name" value="5'-METHYLTHIOADENOSINE_S-ADENOSYLHOMOCYSTEINE NUCLEOSIDASE"/>
    <property type="match status" value="1"/>
</dbReference>
<dbReference type="Pfam" id="PF01048">
    <property type="entry name" value="PNP_UDP_1"/>
    <property type="match status" value="1"/>
</dbReference>
<dbReference type="SUPFAM" id="SSF53167">
    <property type="entry name" value="Purine and uridine phosphorylases"/>
    <property type="match status" value="1"/>
</dbReference>
<accession>Q2YT29</accession>
<reference key="1">
    <citation type="journal article" date="2007" name="PLoS ONE">
        <title>Molecular correlates of host specialization in Staphylococcus aureus.</title>
        <authorList>
            <person name="Herron-Olson L."/>
            <person name="Fitzgerald J.R."/>
            <person name="Musser J.M."/>
            <person name="Kapur V."/>
        </authorList>
    </citation>
    <scope>NUCLEOTIDE SEQUENCE [LARGE SCALE GENOMIC DNA]</scope>
    <source>
        <strain>bovine RF122 / ET3-1</strain>
    </source>
</reference>
<name>MTNN_STAAB</name>
<keyword id="KW-0028">Amino-acid biosynthesis</keyword>
<keyword id="KW-0378">Hydrolase</keyword>
<keyword id="KW-0486">Methionine biosynthesis</keyword>
<protein>
    <recommendedName>
        <fullName evidence="1">5'-methylthioadenosine/S-adenosylhomocysteine nucleosidase</fullName>
        <shortName evidence="1">MTA/SAH nucleosidase</shortName>
        <shortName evidence="1">MTAN</shortName>
        <ecNumber evidence="1">3.2.2.9</ecNumber>
    </recommendedName>
    <alternativeName>
        <fullName evidence="1">5'-deoxyadenosine nucleosidase</fullName>
        <shortName evidence="1">DOA nucleosidase</shortName>
        <shortName evidence="1">dAdo nucleosidase</shortName>
    </alternativeName>
    <alternativeName>
        <fullName evidence="1">5'-methylthioadenosine nucleosidase</fullName>
        <shortName evidence="1">MTA nucleosidase</shortName>
    </alternativeName>
    <alternativeName>
        <fullName evidence="1">S-adenosylhomocysteine nucleosidase</fullName>
        <shortName evidence="1">AdoHcy nucleosidase</shortName>
        <shortName evidence="1">SAH nucleosidase</shortName>
        <shortName evidence="1">SRH nucleosidase</shortName>
    </alternativeName>
</protein>
<comment type="function">
    <text evidence="1">Catalyzes the irreversible cleavage of the glycosidic bond in both 5'-methylthioadenosine (MTA) and S-adenosylhomocysteine (SAH/AdoHcy) to adenine and the corresponding thioribose, 5'-methylthioribose and S-ribosylhomocysteine, respectively. Also cleaves 5'-deoxyadenosine, a toxic by-product of radical S-adenosylmethionine (SAM) enzymes, into 5-deoxyribose and adenine.</text>
</comment>
<comment type="catalytic activity">
    <reaction evidence="1">
        <text>S-adenosyl-L-homocysteine + H2O = S-(5-deoxy-D-ribos-5-yl)-L-homocysteine + adenine</text>
        <dbReference type="Rhea" id="RHEA:17805"/>
        <dbReference type="ChEBI" id="CHEBI:15377"/>
        <dbReference type="ChEBI" id="CHEBI:16708"/>
        <dbReference type="ChEBI" id="CHEBI:57856"/>
        <dbReference type="ChEBI" id="CHEBI:58195"/>
        <dbReference type="EC" id="3.2.2.9"/>
    </reaction>
</comment>
<comment type="catalytic activity">
    <reaction evidence="1">
        <text>S-methyl-5'-thioadenosine + H2O = 5-(methylsulfanyl)-D-ribose + adenine</text>
        <dbReference type="Rhea" id="RHEA:13617"/>
        <dbReference type="ChEBI" id="CHEBI:15377"/>
        <dbReference type="ChEBI" id="CHEBI:16708"/>
        <dbReference type="ChEBI" id="CHEBI:17509"/>
        <dbReference type="ChEBI" id="CHEBI:78440"/>
        <dbReference type="EC" id="3.2.2.9"/>
    </reaction>
</comment>
<comment type="catalytic activity">
    <reaction evidence="1">
        <text>5'-deoxyadenosine + H2O = 5-deoxy-D-ribose + adenine</text>
        <dbReference type="Rhea" id="RHEA:29859"/>
        <dbReference type="ChEBI" id="CHEBI:15377"/>
        <dbReference type="ChEBI" id="CHEBI:16708"/>
        <dbReference type="ChEBI" id="CHEBI:17319"/>
        <dbReference type="ChEBI" id="CHEBI:149540"/>
        <dbReference type="EC" id="3.2.2.9"/>
    </reaction>
    <physiologicalReaction direction="left-to-right" evidence="1">
        <dbReference type="Rhea" id="RHEA:29860"/>
    </physiologicalReaction>
</comment>
<comment type="pathway">
    <text evidence="1">Amino-acid biosynthesis; L-methionine biosynthesis via salvage pathway; S-methyl-5-thio-alpha-D-ribose 1-phosphate from S-methyl-5'-thioadenosine (hydrolase route): step 1/2.</text>
</comment>
<comment type="similarity">
    <text evidence="1">Belongs to the PNP/UDP phosphorylase family. MtnN subfamily.</text>
</comment>
<sequence>MIGIIGAMEEEVTILKNKLTQLSEISVAHVKFYTGILKDREVVITQSGIGKVNAAISTTLLINKFKPDIIINTGSAGALDESLNVGDVLISDDVKYHDADATAFGYEYGQIPQMPVAFQSSKPLIEKVSQVVQQQQLTAKVGLIVSGDSFIGSVEQRQKIKKAFPNAMAVEMEATAIAQTCYQFNVPFVVVRAVSDLANGEAEISFEAFLEKAAVSSSQTVEALVSQL</sequence>
<organism>
    <name type="scientific">Staphylococcus aureus (strain bovine RF122 / ET3-1)</name>
    <dbReference type="NCBI Taxonomy" id="273036"/>
    <lineage>
        <taxon>Bacteria</taxon>
        <taxon>Bacillati</taxon>
        <taxon>Bacillota</taxon>
        <taxon>Bacilli</taxon>
        <taxon>Bacillales</taxon>
        <taxon>Staphylococcaceae</taxon>
        <taxon>Staphylococcus</taxon>
    </lineage>
</organism>
<gene>
    <name evidence="1" type="primary">mtnN</name>
    <name type="ordered locus">SAB1471c</name>
</gene>